<name>NUOJ_SHIFL</name>
<accession>P0AFE3</accession>
<accession>P33605</accession>
<accession>P78236</accession>
<reference key="1">
    <citation type="journal article" date="2002" name="Nucleic Acids Res.">
        <title>Genome sequence of Shigella flexneri 2a: insights into pathogenicity through comparison with genomes of Escherichia coli K12 and O157.</title>
        <authorList>
            <person name="Jin Q."/>
            <person name="Yuan Z."/>
            <person name="Xu J."/>
            <person name="Wang Y."/>
            <person name="Shen Y."/>
            <person name="Lu W."/>
            <person name="Wang J."/>
            <person name="Liu H."/>
            <person name="Yang J."/>
            <person name="Yang F."/>
            <person name="Zhang X."/>
            <person name="Zhang J."/>
            <person name="Yang G."/>
            <person name="Wu H."/>
            <person name="Qu D."/>
            <person name="Dong J."/>
            <person name="Sun L."/>
            <person name="Xue Y."/>
            <person name="Zhao A."/>
            <person name="Gao Y."/>
            <person name="Zhu J."/>
            <person name="Kan B."/>
            <person name="Ding K."/>
            <person name="Chen S."/>
            <person name="Cheng H."/>
            <person name="Yao Z."/>
            <person name="He B."/>
            <person name="Chen R."/>
            <person name="Ma D."/>
            <person name="Qiang B."/>
            <person name="Wen Y."/>
            <person name="Hou Y."/>
            <person name="Yu J."/>
        </authorList>
    </citation>
    <scope>NUCLEOTIDE SEQUENCE [LARGE SCALE GENOMIC DNA]</scope>
    <source>
        <strain>301 / Serotype 2a</strain>
    </source>
</reference>
<reference key="2">
    <citation type="journal article" date="2003" name="Infect. Immun.">
        <title>Complete genome sequence and comparative genomics of Shigella flexneri serotype 2a strain 2457T.</title>
        <authorList>
            <person name="Wei J."/>
            <person name="Goldberg M.B."/>
            <person name="Burland V."/>
            <person name="Venkatesan M.M."/>
            <person name="Deng W."/>
            <person name="Fournier G."/>
            <person name="Mayhew G.F."/>
            <person name="Plunkett G. III"/>
            <person name="Rose D.J."/>
            <person name="Darling A."/>
            <person name="Mau B."/>
            <person name="Perna N.T."/>
            <person name="Payne S.M."/>
            <person name="Runyen-Janecky L.J."/>
            <person name="Zhou S."/>
            <person name="Schwartz D.C."/>
            <person name="Blattner F.R."/>
        </authorList>
    </citation>
    <scope>NUCLEOTIDE SEQUENCE [LARGE SCALE GENOMIC DNA]</scope>
    <source>
        <strain>ATCC 700930 / 2457T / Serotype 2a</strain>
    </source>
</reference>
<gene>
    <name type="primary">nuoJ</name>
    <name type="ordered locus">SF2356</name>
    <name type="ordered locus">S2491</name>
</gene>
<comment type="function">
    <text evidence="1">NDH-1 shuttles electrons from NADH, via FMN and iron-sulfur (Fe-S) centers, to quinones in the respiratory chain. The immediate electron acceptor for the enzyme in this species is believed to be ubiquinone. Couples the redox reaction to proton translocation (for every two electrons transferred, four hydrogen ions are translocated across the cytoplasmic membrane), and thus conserves the redox energy in a proton gradient (By similarity).</text>
</comment>
<comment type="catalytic activity">
    <reaction>
        <text>a quinone + NADH + 5 H(+)(in) = a quinol + NAD(+) + 4 H(+)(out)</text>
        <dbReference type="Rhea" id="RHEA:57888"/>
        <dbReference type="ChEBI" id="CHEBI:15378"/>
        <dbReference type="ChEBI" id="CHEBI:24646"/>
        <dbReference type="ChEBI" id="CHEBI:57540"/>
        <dbReference type="ChEBI" id="CHEBI:57945"/>
        <dbReference type="ChEBI" id="CHEBI:132124"/>
    </reaction>
</comment>
<comment type="subunit">
    <text evidence="1">Composed of 13 different subunits. Subunits NuoA, H, J, K, L, M, N constitute the membrane sector of the complex (By similarity).</text>
</comment>
<comment type="subcellular location">
    <subcellularLocation>
        <location evidence="1">Cell inner membrane</location>
        <topology evidence="1">Multi-pass membrane protein</topology>
    </subcellularLocation>
</comment>
<comment type="similarity">
    <text evidence="3">Belongs to the complex I subunit 6 family.</text>
</comment>
<sequence>MEFAFYICGLIAILATLRVITHTNPVHALLYLIISLLAISGVFFSLGAYFAGALEIIVYAGAIMVLFVFVVMMLNLGGSEIEQERQWLKPQVWIGPAILSAIMLVVIVYAILGVNDQGIDGTPISAKAVGITLFGPYVLAVELASMLLLAGLVVAFHVGREERAGEVLSNRKDDSAKRKTEEHA</sequence>
<protein>
    <recommendedName>
        <fullName>NADH-quinone oxidoreductase subunit J</fullName>
        <ecNumber>7.1.1.-</ecNumber>
    </recommendedName>
    <alternativeName>
        <fullName>NADH dehydrogenase I subunit J</fullName>
    </alternativeName>
    <alternativeName>
        <fullName>NDH-1 subunit J</fullName>
    </alternativeName>
</protein>
<proteinExistence type="inferred from homology"/>
<feature type="chain" id="PRO_0000118373" description="NADH-quinone oxidoreductase subunit J">
    <location>
        <begin position="1"/>
        <end position="184"/>
    </location>
</feature>
<feature type="transmembrane region" description="Helical" evidence="2">
    <location>
        <begin position="1"/>
        <end position="21"/>
    </location>
</feature>
<feature type="topological domain" description="Cytoplasmic" evidence="2">
    <location>
        <begin position="22"/>
        <end position="27"/>
    </location>
</feature>
<feature type="transmembrane region" description="Helical" evidence="2">
    <location>
        <begin position="28"/>
        <end position="48"/>
    </location>
</feature>
<feature type="topological domain" description="Periplasmic" evidence="2">
    <location>
        <begin position="49"/>
        <end position="53"/>
    </location>
</feature>
<feature type="transmembrane region" description="Helical" evidence="2">
    <location>
        <begin position="54"/>
        <end position="74"/>
    </location>
</feature>
<feature type="topological domain" description="Cytoplasmic" evidence="2">
    <location>
        <begin position="75"/>
        <end position="91"/>
    </location>
</feature>
<feature type="transmembrane region" description="Helical" evidence="2">
    <location>
        <begin position="92"/>
        <end position="112"/>
    </location>
</feature>
<feature type="topological domain" description="Periplasmic" evidence="2">
    <location>
        <begin position="113"/>
        <end position="137"/>
    </location>
</feature>
<feature type="transmembrane region" description="Helical" evidence="2">
    <location>
        <begin position="138"/>
        <end position="158"/>
    </location>
</feature>
<feature type="topological domain" description="Cytoplasmic" evidence="2">
    <location>
        <begin position="159"/>
        <end position="184"/>
    </location>
</feature>
<dbReference type="EC" id="7.1.1.-"/>
<dbReference type="EMBL" id="AE005674">
    <property type="protein sequence ID" value="AAN43869.1"/>
    <property type="molecule type" value="Genomic_DNA"/>
</dbReference>
<dbReference type="EMBL" id="AE014073">
    <property type="protein sequence ID" value="AAP17687.1"/>
    <property type="molecule type" value="Genomic_DNA"/>
</dbReference>
<dbReference type="RefSeq" id="NP_708162.1">
    <property type="nucleotide sequence ID" value="NC_004337.2"/>
</dbReference>
<dbReference type="RefSeq" id="WP_000393511.1">
    <property type="nucleotide sequence ID" value="NZ_WPGW01000084.1"/>
</dbReference>
<dbReference type="SMR" id="P0AFE3"/>
<dbReference type="STRING" id="198214.SF2356"/>
<dbReference type="PaxDb" id="198214-SF2356"/>
<dbReference type="GeneID" id="1027237"/>
<dbReference type="GeneID" id="93774894"/>
<dbReference type="KEGG" id="sfl:SF2356"/>
<dbReference type="KEGG" id="sfx:S2491"/>
<dbReference type="PATRIC" id="fig|198214.7.peg.2822"/>
<dbReference type="HOGENOM" id="CLU_085957_0_1_6"/>
<dbReference type="Proteomes" id="UP000001006">
    <property type="component" value="Chromosome"/>
</dbReference>
<dbReference type="Proteomes" id="UP000002673">
    <property type="component" value="Chromosome"/>
</dbReference>
<dbReference type="GO" id="GO:0005886">
    <property type="term" value="C:plasma membrane"/>
    <property type="evidence" value="ECO:0007669"/>
    <property type="project" value="UniProtKB-SubCell"/>
</dbReference>
<dbReference type="GO" id="GO:0008137">
    <property type="term" value="F:NADH dehydrogenase (ubiquinone) activity"/>
    <property type="evidence" value="ECO:0007669"/>
    <property type="project" value="InterPro"/>
</dbReference>
<dbReference type="GO" id="GO:0048038">
    <property type="term" value="F:quinone binding"/>
    <property type="evidence" value="ECO:0007669"/>
    <property type="project" value="UniProtKB-KW"/>
</dbReference>
<dbReference type="FunFam" id="1.20.120.1200:FF:000001">
    <property type="entry name" value="NADH-quinone oxidoreductase subunit J"/>
    <property type="match status" value="1"/>
</dbReference>
<dbReference type="Gene3D" id="1.20.120.1200">
    <property type="entry name" value="NADH-ubiquinone/plastoquinone oxidoreductase chain 6, subunit NuoJ"/>
    <property type="match status" value="1"/>
</dbReference>
<dbReference type="InterPro" id="IPR001457">
    <property type="entry name" value="NADH_UbQ/plastoQ_OxRdtase_su6"/>
</dbReference>
<dbReference type="InterPro" id="IPR042106">
    <property type="entry name" value="Nuo/plastoQ_OxRdtase_6_NuoJ"/>
</dbReference>
<dbReference type="NCBIfam" id="NF005162">
    <property type="entry name" value="PRK06638.1-1"/>
    <property type="match status" value="1"/>
</dbReference>
<dbReference type="PANTHER" id="PTHR33269">
    <property type="entry name" value="NADH-UBIQUINONE OXIDOREDUCTASE CHAIN 6"/>
    <property type="match status" value="1"/>
</dbReference>
<dbReference type="PANTHER" id="PTHR33269:SF17">
    <property type="entry name" value="NADH-UBIQUINONE OXIDOREDUCTASE CHAIN 6"/>
    <property type="match status" value="1"/>
</dbReference>
<dbReference type="Pfam" id="PF00499">
    <property type="entry name" value="Oxidored_q3"/>
    <property type="match status" value="1"/>
</dbReference>
<evidence type="ECO:0000250" key="1"/>
<evidence type="ECO:0000255" key="2"/>
<evidence type="ECO:0000305" key="3"/>
<keyword id="KW-0997">Cell inner membrane</keyword>
<keyword id="KW-1003">Cell membrane</keyword>
<keyword id="KW-0472">Membrane</keyword>
<keyword id="KW-0520">NAD</keyword>
<keyword id="KW-0874">Quinone</keyword>
<keyword id="KW-1185">Reference proteome</keyword>
<keyword id="KW-1278">Translocase</keyword>
<keyword id="KW-0812">Transmembrane</keyword>
<keyword id="KW-1133">Transmembrane helix</keyword>
<keyword id="KW-0830">Ubiquinone</keyword>
<organism>
    <name type="scientific">Shigella flexneri</name>
    <dbReference type="NCBI Taxonomy" id="623"/>
    <lineage>
        <taxon>Bacteria</taxon>
        <taxon>Pseudomonadati</taxon>
        <taxon>Pseudomonadota</taxon>
        <taxon>Gammaproteobacteria</taxon>
        <taxon>Enterobacterales</taxon>
        <taxon>Enterobacteriaceae</taxon>
        <taxon>Shigella</taxon>
    </lineage>
</organism>